<proteinExistence type="inferred from homology"/>
<sequence length="238" mass="25998">MRPNNRELNQVRPVKITRHYTRYAEGSVLVEFGETKVLCNATVEETVPRFLKGQQQGWVTAEYGMLPRSTHSRMQREAAKGKQGGRTMEIQRLIARSLRAVVDLKALGERTVTVDCDVIQADGGTRTAAITGACVALHDAMSKLVADGVLKENPMKGLVAAISVGIVDGNAVCDLEYVEDSNAETDMNVVMVEDGRLVEVQGTAEGEPFSHMELLQLLDLAHQGINQLLDAQRKALAL</sequence>
<gene>
    <name evidence="1" type="primary">rph</name>
    <name type="ordered locus">APL_0055</name>
</gene>
<dbReference type="EC" id="2.7.7.56" evidence="1"/>
<dbReference type="EMBL" id="CP000569">
    <property type="protein sequence ID" value="ABN73163.1"/>
    <property type="molecule type" value="Genomic_DNA"/>
</dbReference>
<dbReference type="RefSeq" id="WP_005600009.1">
    <property type="nucleotide sequence ID" value="NC_009053.1"/>
</dbReference>
<dbReference type="SMR" id="A3MYC7"/>
<dbReference type="STRING" id="416269.APL_0055"/>
<dbReference type="EnsemblBacteria" id="ABN73163">
    <property type="protein sequence ID" value="ABN73163"/>
    <property type="gene ID" value="APL_0055"/>
</dbReference>
<dbReference type="KEGG" id="apl:APL_0055"/>
<dbReference type="eggNOG" id="COG0689">
    <property type="taxonomic scope" value="Bacteria"/>
</dbReference>
<dbReference type="HOGENOM" id="CLU_050858_0_0_6"/>
<dbReference type="Proteomes" id="UP000001432">
    <property type="component" value="Chromosome"/>
</dbReference>
<dbReference type="GO" id="GO:0000175">
    <property type="term" value="F:3'-5'-RNA exonuclease activity"/>
    <property type="evidence" value="ECO:0007669"/>
    <property type="project" value="UniProtKB-UniRule"/>
</dbReference>
<dbReference type="GO" id="GO:0000049">
    <property type="term" value="F:tRNA binding"/>
    <property type="evidence" value="ECO:0007669"/>
    <property type="project" value="UniProtKB-UniRule"/>
</dbReference>
<dbReference type="GO" id="GO:0009022">
    <property type="term" value="F:tRNA nucleotidyltransferase activity"/>
    <property type="evidence" value="ECO:0007669"/>
    <property type="project" value="UniProtKB-UniRule"/>
</dbReference>
<dbReference type="GO" id="GO:0016075">
    <property type="term" value="P:rRNA catabolic process"/>
    <property type="evidence" value="ECO:0007669"/>
    <property type="project" value="UniProtKB-UniRule"/>
</dbReference>
<dbReference type="GO" id="GO:0006364">
    <property type="term" value="P:rRNA processing"/>
    <property type="evidence" value="ECO:0007669"/>
    <property type="project" value="UniProtKB-KW"/>
</dbReference>
<dbReference type="GO" id="GO:0008033">
    <property type="term" value="P:tRNA processing"/>
    <property type="evidence" value="ECO:0007669"/>
    <property type="project" value="UniProtKB-UniRule"/>
</dbReference>
<dbReference type="CDD" id="cd11362">
    <property type="entry name" value="RNase_PH_bact"/>
    <property type="match status" value="1"/>
</dbReference>
<dbReference type="FunFam" id="3.30.230.70:FF:000003">
    <property type="entry name" value="Ribonuclease PH"/>
    <property type="match status" value="1"/>
</dbReference>
<dbReference type="Gene3D" id="3.30.230.70">
    <property type="entry name" value="GHMP Kinase, N-terminal domain"/>
    <property type="match status" value="1"/>
</dbReference>
<dbReference type="HAMAP" id="MF_00564">
    <property type="entry name" value="RNase_PH"/>
    <property type="match status" value="1"/>
</dbReference>
<dbReference type="InterPro" id="IPR001247">
    <property type="entry name" value="ExoRNase_PH_dom1"/>
</dbReference>
<dbReference type="InterPro" id="IPR015847">
    <property type="entry name" value="ExoRNase_PH_dom2"/>
</dbReference>
<dbReference type="InterPro" id="IPR036345">
    <property type="entry name" value="ExoRNase_PH_dom2_sf"/>
</dbReference>
<dbReference type="InterPro" id="IPR027408">
    <property type="entry name" value="PNPase/RNase_PH_dom_sf"/>
</dbReference>
<dbReference type="InterPro" id="IPR020568">
    <property type="entry name" value="Ribosomal_Su5_D2-typ_SF"/>
</dbReference>
<dbReference type="InterPro" id="IPR050080">
    <property type="entry name" value="RNase_PH"/>
</dbReference>
<dbReference type="InterPro" id="IPR002381">
    <property type="entry name" value="RNase_PH_bac-type"/>
</dbReference>
<dbReference type="InterPro" id="IPR018336">
    <property type="entry name" value="RNase_PH_CS"/>
</dbReference>
<dbReference type="NCBIfam" id="TIGR01966">
    <property type="entry name" value="RNasePH"/>
    <property type="match status" value="1"/>
</dbReference>
<dbReference type="PANTHER" id="PTHR11953">
    <property type="entry name" value="EXOSOME COMPLEX COMPONENT"/>
    <property type="match status" value="1"/>
</dbReference>
<dbReference type="PANTHER" id="PTHR11953:SF0">
    <property type="entry name" value="EXOSOME COMPLEX COMPONENT RRP41"/>
    <property type="match status" value="1"/>
</dbReference>
<dbReference type="Pfam" id="PF01138">
    <property type="entry name" value="RNase_PH"/>
    <property type="match status" value="1"/>
</dbReference>
<dbReference type="Pfam" id="PF03725">
    <property type="entry name" value="RNase_PH_C"/>
    <property type="match status" value="1"/>
</dbReference>
<dbReference type="SUPFAM" id="SSF55666">
    <property type="entry name" value="Ribonuclease PH domain 2-like"/>
    <property type="match status" value="1"/>
</dbReference>
<dbReference type="SUPFAM" id="SSF54211">
    <property type="entry name" value="Ribosomal protein S5 domain 2-like"/>
    <property type="match status" value="1"/>
</dbReference>
<dbReference type="PROSITE" id="PS01277">
    <property type="entry name" value="RIBONUCLEASE_PH"/>
    <property type="match status" value="1"/>
</dbReference>
<organism>
    <name type="scientific">Actinobacillus pleuropneumoniae serotype 5b (strain L20)</name>
    <dbReference type="NCBI Taxonomy" id="416269"/>
    <lineage>
        <taxon>Bacteria</taxon>
        <taxon>Pseudomonadati</taxon>
        <taxon>Pseudomonadota</taxon>
        <taxon>Gammaproteobacteria</taxon>
        <taxon>Pasteurellales</taxon>
        <taxon>Pasteurellaceae</taxon>
        <taxon>Actinobacillus</taxon>
    </lineage>
</organism>
<accession>A3MYC7</accession>
<comment type="function">
    <text evidence="1">Phosphorolytic 3'-5' exoribonuclease that plays an important role in tRNA 3'-end maturation. Removes nucleotide residues following the 3'-CCA terminus of tRNAs; can also add nucleotides to the ends of RNA molecules by using nucleoside diphosphates as substrates, but this may not be physiologically important. Probably plays a role in initiation of 16S rRNA degradation (leading to ribosome degradation) during starvation.</text>
</comment>
<comment type="catalytic activity">
    <reaction evidence="1">
        <text>tRNA(n+1) + phosphate = tRNA(n) + a ribonucleoside 5'-diphosphate</text>
        <dbReference type="Rhea" id="RHEA:10628"/>
        <dbReference type="Rhea" id="RHEA-COMP:17343"/>
        <dbReference type="Rhea" id="RHEA-COMP:17344"/>
        <dbReference type="ChEBI" id="CHEBI:43474"/>
        <dbReference type="ChEBI" id="CHEBI:57930"/>
        <dbReference type="ChEBI" id="CHEBI:173114"/>
        <dbReference type="EC" id="2.7.7.56"/>
    </reaction>
</comment>
<comment type="subunit">
    <text evidence="1">Homohexameric ring arranged as a trimer of dimers.</text>
</comment>
<comment type="similarity">
    <text evidence="1">Belongs to the RNase PH family.</text>
</comment>
<reference key="1">
    <citation type="journal article" date="2008" name="J. Bacteriol.">
        <title>The complete genome sequence of Actinobacillus pleuropneumoniae L20 (serotype 5b).</title>
        <authorList>
            <person name="Foote S.J."/>
            <person name="Bosse J.T."/>
            <person name="Bouevitch A.B."/>
            <person name="Langford P.R."/>
            <person name="Young N.M."/>
            <person name="Nash J.H.E."/>
        </authorList>
    </citation>
    <scope>NUCLEOTIDE SEQUENCE [LARGE SCALE GENOMIC DNA]</scope>
    <source>
        <strain>L20</strain>
    </source>
</reference>
<evidence type="ECO:0000255" key="1">
    <source>
        <dbReference type="HAMAP-Rule" id="MF_00564"/>
    </source>
</evidence>
<name>RNPH_ACTP2</name>
<protein>
    <recommendedName>
        <fullName evidence="1">Ribonuclease PH</fullName>
        <shortName evidence="1">RNase PH</shortName>
        <ecNumber evidence="1">2.7.7.56</ecNumber>
    </recommendedName>
    <alternativeName>
        <fullName evidence="1">tRNA nucleotidyltransferase</fullName>
    </alternativeName>
</protein>
<keyword id="KW-0548">Nucleotidyltransferase</keyword>
<keyword id="KW-1185">Reference proteome</keyword>
<keyword id="KW-0694">RNA-binding</keyword>
<keyword id="KW-0698">rRNA processing</keyword>
<keyword id="KW-0808">Transferase</keyword>
<keyword id="KW-0819">tRNA processing</keyword>
<keyword id="KW-0820">tRNA-binding</keyword>
<feature type="chain" id="PRO_1000024768" description="Ribonuclease PH">
    <location>
        <begin position="1"/>
        <end position="238"/>
    </location>
</feature>
<feature type="binding site" evidence="1">
    <location>
        <position position="86"/>
    </location>
    <ligand>
        <name>phosphate</name>
        <dbReference type="ChEBI" id="CHEBI:43474"/>
        <note>substrate</note>
    </ligand>
</feature>
<feature type="binding site" evidence="1">
    <location>
        <begin position="124"/>
        <end position="126"/>
    </location>
    <ligand>
        <name>phosphate</name>
        <dbReference type="ChEBI" id="CHEBI:43474"/>
        <note>substrate</note>
    </ligand>
</feature>